<proteinExistence type="inferred from homology"/>
<evidence type="ECO:0000255" key="1">
    <source>
        <dbReference type="HAMAP-Rule" id="MF_01543"/>
    </source>
</evidence>
<keyword id="KW-0067">ATP-binding</keyword>
<keyword id="KW-0436">Ligase</keyword>
<keyword id="KW-0547">Nucleotide-binding</keyword>
<keyword id="KW-0554">One-carbon metabolism</keyword>
<feature type="chain" id="PRO_0000199383" description="Formate--tetrahydrofolate ligase">
    <location>
        <begin position="1"/>
        <end position="555"/>
    </location>
</feature>
<feature type="binding site" evidence="1">
    <location>
        <begin position="65"/>
        <end position="72"/>
    </location>
    <ligand>
        <name>ATP</name>
        <dbReference type="ChEBI" id="CHEBI:30616"/>
    </ligand>
</feature>
<sequence>MAHLSDLDIANQSELKPIGEIAEKAGIPADALEQYGHYKAKIDINQIKPKDNKGKVVLVTAMSPTPAGEGKSTVTVGLSDAFNELKKNVMVALREPALGPTFGIKGGATGGGYAQVLPMEDINLHFNGDFHAITTANNALSAFIDNHIHQGNELGIDVRRVEWKRVLDMNDRALRHVNVGLGGPTNGVPREDGFNITVASEVMAILCLARNINDLKEKISRITIGYTRDRKPVTVADLKVEGALAMILKDAIKPNLVQTIEGTPALVHGGPFANIAHGCNSILATETARDLADIVVTEAGFGSDLGAEKFIDIKAREAGFEPSAVVLVATVRALKMHGGVAKDDLKEENVEAVKAGIVNLERHVNNIRKFGVEPVIALNAFIHDTDAETEAVKAWAKENNVRIALTEVWEKGGKGGVELANQVLEVIEQPNDFKFLYDLDQSLEEKIETIVKDIYGGSSVTFSKKAKKQLKEFTDNGWGQYPICMAKTQYSFSDDATALGAPTDFDITIRELEAKTGAGFIVALTGAIMTMPGLPKKPAALNMDVTEDGHAVGLF</sequence>
<accession>Q4L776</accession>
<comment type="catalytic activity">
    <reaction evidence="1">
        <text>(6S)-5,6,7,8-tetrahydrofolate + formate + ATP = (6R)-10-formyltetrahydrofolate + ADP + phosphate</text>
        <dbReference type="Rhea" id="RHEA:20221"/>
        <dbReference type="ChEBI" id="CHEBI:15740"/>
        <dbReference type="ChEBI" id="CHEBI:30616"/>
        <dbReference type="ChEBI" id="CHEBI:43474"/>
        <dbReference type="ChEBI" id="CHEBI:57453"/>
        <dbReference type="ChEBI" id="CHEBI:195366"/>
        <dbReference type="ChEBI" id="CHEBI:456216"/>
        <dbReference type="EC" id="6.3.4.3"/>
    </reaction>
</comment>
<comment type="pathway">
    <text evidence="1">One-carbon metabolism; tetrahydrofolate interconversion.</text>
</comment>
<comment type="similarity">
    <text evidence="1">Belongs to the formate--tetrahydrofolate ligase family.</text>
</comment>
<dbReference type="EC" id="6.3.4.3" evidence="1"/>
<dbReference type="EMBL" id="AP006716">
    <property type="protein sequence ID" value="BAE04499.1"/>
    <property type="molecule type" value="Genomic_DNA"/>
</dbReference>
<dbReference type="RefSeq" id="WP_011275491.1">
    <property type="nucleotide sequence ID" value="NC_007168.1"/>
</dbReference>
<dbReference type="SMR" id="Q4L776"/>
<dbReference type="KEGG" id="sha:SH1190"/>
<dbReference type="eggNOG" id="COG2759">
    <property type="taxonomic scope" value="Bacteria"/>
</dbReference>
<dbReference type="HOGENOM" id="CLU_003601_3_3_9"/>
<dbReference type="OrthoDB" id="9761733at2"/>
<dbReference type="UniPathway" id="UPA00193"/>
<dbReference type="Proteomes" id="UP000000543">
    <property type="component" value="Chromosome"/>
</dbReference>
<dbReference type="GO" id="GO:0005524">
    <property type="term" value="F:ATP binding"/>
    <property type="evidence" value="ECO:0007669"/>
    <property type="project" value="UniProtKB-UniRule"/>
</dbReference>
<dbReference type="GO" id="GO:0004329">
    <property type="term" value="F:formate-tetrahydrofolate ligase activity"/>
    <property type="evidence" value="ECO:0007669"/>
    <property type="project" value="UniProtKB-UniRule"/>
</dbReference>
<dbReference type="GO" id="GO:0035999">
    <property type="term" value="P:tetrahydrofolate interconversion"/>
    <property type="evidence" value="ECO:0007669"/>
    <property type="project" value="UniProtKB-UniRule"/>
</dbReference>
<dbReference type="CDD" id="cd00477">
    <property type="entry name" value="FTHFS"/>
    <property type="match status" value="1"/>
</dbReference>
<dbReference type="FunFam" id="3.30.1510.10:FF:000001">
    <property type="entry name" value="Formate--tetrahydrofolate ligase"/>
    <property type="match status" value="1"/>
</dbReference>
<dbReference type="FunFam" id="3.10.410.10:FF:000001">
    <property type="entry name" value="Putative formate--tetrahydrofolate ligase"/>
    <property type="match status" value="1"/>
</dbReference>
<dbReference type="Gene3D" id="3.30.1510.10">
    <property type="entry name" value="Domain 2, N(10)-formyltetrahydrofolate synthetase"/>
    <property type="match status" value="1"/>
</dbReference>
<dbReference type="Gene3D" id="3.10.410.10">
    <property type="entry name" value="Formyltetrahydrofolate synthetase, domain 3"/>
    <property type="match status" value="1"/>
</dbReference>
<dbReference type="Gene3D" id="3.40.50.300">
    <property type="entry name" value="P-loop containing nucleotide triphosphate hydrolases"/>
    <property type="match status" value="1"/>
</dbReference>
<dbReference type="HAMAP" id="MF_01543">
    <property type="entry name" value="FTHFS"/>
    <property type="match status" value="1"/>
</dbReference>
<dbReference type="InterPro" id="IPR000559">
    <property type="entry name" value="Formate_THF_ligase"/>
</dbReference>
<dbReference type="InterPro" id="IPR020628">
    <property type="entry name" value="Formate_THF_ligase_CS"/>
</dbReference>
<dbReference type="InterPro" id="IPR027417">
    <property type="entry name" value="P-loop_NTPase"/>
</dbReference>
<dbReference type="NCBIfam" id="NF010030">
    <property type="entry name" value="PRK13505.1"/>
    <property type="match status" value="1"/>
</dbReference>
<dbReference type="Pfam" id="PF01268">
    <property type="entry name" value="FTHFS"/>
    <property type="match status" value="1"/>
</dbReference>
<dbReference type="SUPFAM" id="SSF52540">
    <property type="entry name" value="P-loop containing nucleoside triphosphate hydrolases"/>
    <property type="match status" value="1"/>
</dbReference>
<dbReference type="PROSITE" id="PS00721">
    <property type="entry name" value="FTHFS_1"/>
    <property type="match status" value="1"/>
</dbReference>
<dbReference type="PROSITE" id="PS00722">
    <property type="entry name" value="FTHFS_2"/>
    <property type="match status" value="1"/>
</dbReference>
<organism>
    <name type="scientific">Staphylococcus haemolyticus (strain JCSC1435)</name>
    <dbReference type="NCBI Taxonomy" id="279808"/>
    <lineage>
        <taxon>Bacteria</taxon>
        <taxon>Bacillati</taxon>
        <taxon>Bacillota</taxon>
        <taxon>Bacilli</taxon>
        <taxon>Bacillales</taxon>
        <taxon>Staphylococcaceae</taxon>
        <taxon>Staphylococcus</taxon>
    </lineage>
</organism>
<protein>
    <recommendedName>
        <fullName evidence="1">Formate--tetrahydrofolate ligase</fullName>
        <ecNumber evidence="1">6.3.4.3</ecNumber>
    </recommendedName>
    <alternativeName>
        <fullName evidence="1">Formyltetrahydrofolate synthetase</fullName>
        <shortName evidence="1">FHS</shortName>
        <shortName evidence="1">FTHFS</shortName>
    </alternativeName>
</protein>
<gene>
    <name evidence="1" type="primary">fhs</name>
    <name type="ordered locus">SH1190</name>
</gene>
<reference key="1">
    <citation type="journal article" date="2005" name="J. Bacteriol.">
        <title>Whole-genome sequencing of Staphylococcus haemolyticus uncovers the extreme plasticity of its genome and the evolution of human-colonizing staphylococcal species.</title>
        <authorList>
            <person name="Takeuchi F."/>
            <person name="Watanabe S."/>
            <person name="Baba T."/>
            <person name="Yuzawa H."/>
            <person name="Ito T."/>
            <person name="Morimoto Y."/>
            <person name="Kuroda M."/>
            <person name="Cui L."/>
            <person name="Takahashi M."/>
            <person name="Ankai A."/>
            <person name="Baba S."/>
            <person name="Fukui S."/>
            <person name="Lee J.C."/>
            <person name="Hiramatsu K."/>
        </authorList>
    </citation>
    <scope>NUCLEOTIDE SEQUENCE [LARGE SCALE GENOMIC DNA]</scope>
    <source>
        <strain>JCSC1435</strain>
    </source>
</reference>
<name>FTHS_STAHJ</name>